<evidence type="ECO:0000255" key="1">
    <source>
        <dbReference type="HAMAP-Rule" id="MF_00379"/>
    </source>
</evidence>
<dbReference type="EC" id="3.6.-.-" evidence="1"/>
<dbReference type="EMBL" id="CP000517">
    <property type="protein sequence ID" value="ABX27881.1"/>
    <property type="molecule type" value="Genomic_DNA"/>
</dbReference>
<dbReference type="RefSeq" id="WP_012212407.1">
    <property type="nucleotide sequence ID" value="NC_010080.1"/>
</dbReference>
<dbReference type="SMR" id="A8YTQ7"/>
<dbReference type="KEGG" id="lhe:lhv_2104"/>
<dbReference type="eggNOG" id="COG0486">
    <property type="taxonomic scope" value="Bacteria"/>
</dbReference>
<dbReference type="HOGENOM" id="CLU_019624_4_1_9"/>
<dbReference type="Proteomes" id="UP000000790">
    <property type="component" value="Chromosome"/>
</dbReference>
<dbReference type="GO" id="GO:0005829">
    <property type="term" value="C:cytosol"/>
    <property type="evidence" value="ECO:0007669"/>
    <property type="project" value="TreeGrafter"/>
</dbReference>
<dbReference type="GO" id="GO:0005525">
    <property type="term" value="F:GTP binding"/>
    <property type="evidence" value="ECO:0007669"/>
    <property type="project" value="UniProtKB-UniRule"/>
</dbReference>
<dbReference type="GO" id="GO:0003924">
    <property type="term" value="F:GTPase activity"/>
    <property type="evidence" value="ECO:0007669"/>
    <property type="project" value="UniProtKB-UniRule"/>
</dbReference>
<dbReference type="GO" id="GO:0046872">
    <property type="term" value="F:metal ion binding"/>
    <property type="evidence" value="ECO:0007669"/>
    <property type="project" value="UniProtKB-KW"/>
</dbReference>
<dbReference type="GO" id="GO:0030488">
    <property type="term" value="P:tRNA methylation"/>
    <property type="evidence" value="ECO:0007669"/>
    <property type="project" value="TreeGrafter"/>
</dbReference>
<dbReference type="GO" id="GO:0002098">
    <property type="term" value="P:tRNA wobble uridine modification"/>
    <property type="evidence" value="ECO:0007669"/>
    <property type="project" value="TreeGrafter"/>
</dbReference>
<dbReference type="CDD" id="cd04164">
    <property type="entry name" value="trmE"/>
    <property type="match status" value="1"/>
</dbReference>
<dbReference type="CDD" id="cd14858">
    <property type="entry name" value="TrmE_N"/>
    <property type="match status" value="1"/>
</dbReference>
<dbReference type="FunFam" id="3.30.1360.120:FF:000003">
    <property type="entry name" value="tRNA modification GTPase MnmE"/>
    <property type="match status" value="1"/>
</dbReference>
<dbReference type="FunFam" id="3.40.50.300:FF:000494">
    <property type="entry name" value="tRNA modification GTPase MnmE"/>
    <property type="match status" value="1"/>
</dbReference>
<dbReference type="Gene3D" id="3.40.50.300">
    <property type="entry name" value="P-loop containing nucleotide triphosphate hydrolases"/>
    <property type="match status" value="1"/>
</dbReference>
<dbReference type="Gene3D" id="3.30.1360.120">
    <property type="entry name" value="Probable tRNA modification gtpase trme, domain 1"/>
    <property type="match status" value="1"/>
</dbReference>
<dbReference type="Gene3D" id="1.20.120.430">
    <property type="entry name" value="tRNA modification GTPase MnmE domain 2"/>
    <property type="match status" value="1"/>
</dbReference>
<dbReference type="HAMAP" id="MF_00379">
    <property type="entry name" value="GTPase_MnmE"/>
    <property type="match status" value="1"/>
</dbReference>
<dbReference type="InterPro" id="IPR031168">
    <property type="entry name" value="G_TrmE"/>
</dbReference>
<dbReference type="InterPro" id="IPR006073">
    <property type="entry name" value="GTP-bd"/>
</dbReference>
<dbReference type="InterPro" id="IPR018948">
    <property type="entry name" value="GTP-bd_TrmE_N"/>
</dbReference>
<dbReference type="InterPro" id="IPR004520">
    <property type="entry name" value="GTPase_MnmE"/>
</dbReference>
<dbReference type="InterPro" id="IPR027368">
    <property type="entry name" value="MnmE_dom2"/>
</dbReference>
<dbReference type="InterPro" id="IPR025867">
    <property type="entry name" value="MnmE_helical"/>
</dbReference>
<dbReference type="InterPro" id="IPR027417">
    <property type="entry name" value="P-loop_NTPase"/>
</dbReference>
<dbReference type="InterPro" id="IPR005225">
    <property type="entry name" value="Small_GTP-bd"/>
</dbReference>
<dbReference type="InterPro" id="IPR027266">
    <property type="entry name" value="TrmE/GcvT_dom1"/>
</dbReference>
<dbReference type="NCBIfam" id="TIGR00450">
    <property type="entry name" value="mnmE_trmE_thdF"/>
    <property type="match status" value="1"/>
</dbReference>
<dbReference type="NCBIfam" id="NF003661">
    <property type="entry name" value="PRK05291.1-3"/>
    <property type="match status" value="1"/>
</dbReference>
<dbReference type="NCBIfam" id="TIGR00231">
    <property type="entry name" value="small_GTP"/>
    <property type="match status" value="1"/>
</dbReference>
<dbReference type="PANTHER" id="PTHR42714">
    <property type="entry name" value="TRNA MODIFICATION GTPASE GTPBP3"/>
    <property type="match status" value="1"/>
</dbReference>
<dbReference type="PANTHER" id="PTHR42714:SF2">
    <property type="entry name" value="TRNA MODIFICATION GTPASE GTPBP3, MITOCHONDRIAL"/>
    <property type="match status" value="1"/>
</dbReference>
<dbReference type="Pfam" id="PF01926">
    <property type="entry name" value="MMR_HSR1"/>
    <property type="match status" value="1"/>
</dbReference>
<dbReference type="Pfam" id="PF12631">
    <property type="entry name" value="MnmE_helical"/>
    <property type="match status" value="1"/>
</dbReference>
<dbReference type="Pfam" id="PF10396">
    <property type="entry name" value="TrmE_N"/>
    <property type="match status" value="1"/>
</dbReference>
<dbReference type="SUPFAM" id="SSF52540">
    <property type="entry name" value="P-loop containing nucleoside triphosphate hydrolases"/>
    <property type="match status" value="1"/>
</dbReference>
<dbReference type="PROSITE" id="PS51709">
    <property type="entry name" value="G_TRME"/>
    <property type="match status" value="1"/>
</dbReference>
<sequence length="461" mass="50433">MAQTLTEFDTIAAISTPIGEGGISIVRMSGEDAVKIANEVFKGADLTKVPTHTIHYGHIVDPDTDKTIDESMVTVLRAPKTFTREDIVEINCHGGIVVTNHILQLLLSHGARMADPGEFTKRAFVNGRIDLTQAESVMDIVRAKTDKARQVAVGQLAGGLLHKIQAMRQEILDTLANVEVNIDYPEYDADTVTAKQMADTAKSVIKKIDRLLKTAQEGKILRNGLATAIVGRPNVGKSSLLNYLTQSDKAIVTDVAGTTRDTLEEYVSVKGVPLELIDTAGIHHTDDKVEKIGVERSKKALDRADLVLLLIDASQELTAEDKALIEETKDKKRIIVLNKSDLGQKITVDEMKKQTGSDVILTSILKEKNLDKLEELINKLFFAGIENSNDQVMVTNQRQTSLLTKAKKELQDVVQAVEDGIPIDIAQIDFTGAWDTLGEITGESAPDELVTQLFSQFCLGK</sequence>
<comment type="function">
    <text evidence="1">Exhibits a very high intrinsic GTPase hydrolysis rate. Involved in the addition of a carboxymethylaminomethyl (cmnm) group at the wobble position (U34) of certain tRNAs, forming tRNA-cmnm(5)s(2)U34.</text>
</comment>
<comment type="cofactor">
    <cofactor evidence="1">
        <name>K(+)</name>
        <dbReference type="ChEBI" id="CHEBI:29103"/>
    </cofactor>
    <text evidence="1">Binds 1 potassium ion per subunit.</text>
</comment>
<comment type="subunit">
    <text evidence="1">Homodimer. Heterotetramer of two MnmE and two MnmG subunits.</text>
</comment>
<comment type="subcellular location">
    <subcellularLocation>
        <location evidence="1">Cytoplasm</location>
    </subcellularLocation>
</comment>
<comment type="similarity">
    <text evidence="1">Belongs to the TRAFAC class TrmE-Era-EngA-EngB-Septin-like GTPase superfamily. TrmE GTPase family.</text>
</comment>
<keyword id="KW-0963">Cytoplasm</keyword>
<keyword id="KW-0342">GTP-binding</keyword>
<keyword id="KW-0378">Hydrolase</keyword>
<keyword id="KW-0460">Magnesium</keyword>
<keyword id="KW-0479">Metal-binding</keyword>
<keyword id="KW-0547">Nucleotide-binding</keyword>
<keyword id="KW-0630">Potassium</keyword>
<keyword id="KW-0819">tRNA processing</keyword>
<accession>A8YTQ7</accession>
<gene>
    <name evidence="1" type="primary">mnmE</name>
    <name evidence="1" type="synonym">trmE</name>
    <name type="ordered locus">lhv_2104</name>
</gene>
<reference key="1">
    <citation type="journal article" date="2008" name="J. Bacteriol.">
        <title>Genome sequence of Lactobacillus helveticus: an organism distinguished by selective gene loss and IS element expansion.</title>
        <authorList>
            <person name="Callanan M."/>
            <person name="Kaleta P."/>
            <person name="O'Callaghan J."/>
            <person name="O'Sullivan O."/>
            <person name="Jordan K."/>
            <person name="McAuliffe O."/>
            <person name="Sangrador-Vegas A."/>
            <person name="Slattery L."/>
            <person name="Fitzgerald G.F."/>
            <person name="Beresford T."/>
            <person name="Ross R.P."/>
        </authorList>
    </citation>
    <scope>NUCLEOTIDE SEQUENCE [LARGE SCALE GENOMIC DNA]</scope>
    <source>
        <strain>DPC 4571</strain>
    </source>
</reference>
<feature type="chain" id="PRO_0000345810" description="tRNA modification GTPase MnmE">
    <location>
        <begin position="1"/>
        <end position="461"/>
    </location>
</feature>
<feature type="domain" description="TrmE-type G">
    <location>
        <begin position="224"/>
        <end position="382"/>
    </location>
</feature>
<feature type="binding site" evidence="1">
    <location>
        <position position="27"/>
    </location>
    <ligand>
        <name>(6S)-5-formyl-5,6,7,8-tetrahydrofolate</name>
        <dbReference type="ChEBI" id="CHEBI:57457"/>
    </ligand>
</feature>
<feature type="binding site" evidence="1">
    <location>
        <position position="89"/>
    </location>
    <ligand>
        <name>(6S)-5-formyl-5,6,7,8-tetrahydrofolate</name>
        <dbReference type="ChEBI" id="CHEBI:57457"/>
    </ligand>
</feature>
<feature type="binding site" evidence="1">
    <location>
        <position position="128"/>
    </location>
    <ligand>
        <name>(6S)-5-formyl-5,6,7,8-tetrahydrofolate</name>
        <dbReference type="ChEBI" id="CHEBI:57457"/>
    </ligand>
</feature>
<feature type="binding site" evidence="1">
    <location>
        <begin position="234"/>
        <end position="239"/>
    </location>
    <ligand>
        <name>GTP</name>
        <dbReference type="ChEBI" id="CHEBI:37565"/>
    </ligand>
</feature>
<feature type="binding site" evidence="1">
    <location>
        <position position="234"/>
    </location>
    <ligand>
        <name>K(+)</name>
        <dbReference type="ChEBI" id="CHEBI:29103"/>
    </ligand>
</feature>
<feature type="binding site" evidence="1">
    <location>
        <position position="238"/>
    </location>
    <ligand>
        <name>Mg(2+)</name>
        <dbReference type="ChEBI" id="CHEBI:18420"/>
    </ligand>
</feature>
<feature type="binding site" evidence="1">
    <location>
        <begin position="253"/>
        <end position="259"/>
    </location>
    <ligand>
        <name>GTP</name>
        <dbReference type="ChEBI" id="CHEBI:37565"/>
    </ligand>
</feature>
<feature type="binding site" evidence="1">
    <location>
        <position position="253"/>
    </location>
    <ligand>
        <name>K(+)</name>
        <dbReference type="ChEBI" id="CHEBI:29103"/>
    </ligand>
</feature>
<feature type="binding site" evidence="1">
    <location>
        <position position="255"/>
    </location>
    <ligand>
        <name>K(+)</name>
        <dbReference type="ChEBI" id="CHEBI:29103"/>
    </ligand>
</feature>
<feature type="binding site" evidence="1">
    <location>
        <position position="258"/>
    </location>
    <ligand>
        <name>K(+)</name>
        <dbReference type="ChEBI" id="CHEBI:29103"/>
    </ligand>
</feature>
<feature type="binding site" evidence="1">
    <location>
        <position position="259"/>
    </location>
    <ligand>
        <name>Mg(2+)</name>
        <dbReference type="ChEBI" id="CHEBI:18420"/>
    </ligand>
</feature>
<feature type="binding site" evidence="1">
    <location>
        <begin position="278"/>
        <end position="281"/>
    </location>
    <ligand>
        <name>GTP</name>
        <dbReference type="ChEBI" id="CHEBI:37565"/>
    </ligand>
</feature>
<feature type="binding site" evidence="1">
    <location>
        <position position="461"/>
    </location>
    <ligand>
        <name>(6S)-5-formyl-5,6,7,8-tetrahydrofolate</name>
        <dbReference type="ChEBI" id="CHEBI:57457"/>
    </ligand>
</feature>
<protein>
    <recommendedName>
        <fullName evidence="1">tRNA modification GTPase MnmE</fullName>
        <ecNumber evidence="1">3.6.-.-</ecNumber>
    </recommendedName>
</protein>
<name>MNME_LACH4</name>
<organism>
    <name type="scientific">Lactobacillus helveticus (strain DPC 4571)</name>
    <dbReference type="NCBI Taxonomy" id="405566"/>
    <lineage>
        <taxon>Bacteria</taxon>
        <taxon>Bacillati</taxon>
        <taxon>Bacillota</taxon>
        <taxon>Bacilli</taxon>
        <taxon>Lactobacillales</taxon>
        <taxon>Lactobacillaceae</taxon>
        <taxon>Lactobacillus</taxon>
    </lineage>
</organism>
<proteinExistence type="inferred from homology"/>